<reference key="1">
    <citation type="journal article" date="2006" name="Proc. Natl. Acad. Sci. U.S.A.">
        <title>Comparative genomics of the lactic acid bacteria.</title>
        <authorList>
            <person name="Makarova K.S."/>
            <person name="Slesarev A."/>
            <person name="Wolf Y.I."/>
            <person name="Sorokin A."/>
            <person name="Mirkin B."/>
            <person name="Koonin E.V."/>
            <person name="Pavlov A."/>
            <person name="Pavlova N."/>
            <person name="Karamychev V."/>
            <person name="Polouchine N."/>
            <person name="Shakhova V."/>
            <person name="Grigoriev I."/>
            <person name="Lou Y."/>
            <person name="Rohksar D."/>
            <person name="Lucas S."/>
            <person name="Huang K."/>
            <person name="Goodstein D.M."/>
            <person name="Hawkins T."/>
            <person name="Plengvidhya V."/>
            <person name="Welker D."/>
            <person name="Hughes J."/>
            <person name="Goh Y."/>
            <person name="Benson A."/>
            <person name="Baldwin K."/>
            <person name="Lee J.-H."/>
            <person name="Diaz-Muniz I."/>
            <person name="Dosti B."/>
            <person name="Smeianov V."/>
            <person name="Wechter W."/>
            <person name="Barabote R."/>
            <person name="Lorca G."/>
            <person name="Altermann E."/>
            <person name="Barrangou R."/>
            <person name="Ganesan B."/>
            <person name="Xie Y."/>
            <person name="Rawsthorne H."/>
            <person name="Tamir D."/>
            <person name="Parker C."/>
            <person name="Breidt F."/>
            <person name="Broadbent J.R."/>
            <person name="Hutkins R."/>
            <person name="O'Sullivan D."/>
            <person name="Steele J."/>
            <person name="Unlu G."/>
            <person name="Saier M.H. Jr."/>
            <person name="Klaenhammer T."/>
            <person name="Richardson P."/>
            <person name="Kozyavkin S."/>
            <person name="Weimer B.C."/>
            <person name="Mills D.A."/>
        </authorList>
    </citation>
    <scope>NUCLEOTIDE SEQUENCE [LARGE SCALE GENOMIC DNA]</scope>
    <source>
        <strain>ATCC BAA-365 / Lb-18</strain>
    </source>
</reference>
<name>RL9_LACDB</name>
<protein>
    <recommendedName>
        <fullName evidence="1">Large ribosomal subunit protein bL9</fullName>
    </recommendedName>
    <alternativeName>
        <fullName evidence="2">50S ribosomal protein L9</fullName>
    </alternativeName>
</protein>
<sequence length="151" mass="16940">MKVIFMQDVKGRGKRGQVKDVPNGYAQNYLIKQGLAKEANKCNLNTLKRVEANEKAEYEAQKAAAQEIKKQLEADETVVELKAKAGSDSRLFGSISSKKIIEGLDKQFGIKLDKHKLELREPIKVLGYTNVPVKLFKGVESKVRVHVTQEN</sequence>
<evidence type="ECO:0000255" key="1">
    <source>
        <dbReference type="HAMAP-Rule" id="MF_00503"/>
    </source>
</evidence>
<evidence type="ECO:0000305" key="2"/>
<accession>Q04CW5</accession>
<organism>
    <name type="scientific">Lactobacillus delbrueckii subsp. bulgaricus (strain ATCC BAA-365 / Lb-18)</name>
    <dbReference type="NCBI Taxonomy" id="321956"/>
    <lineage>
        <taxon>Bacteria</taxon>
        <taxon>Bacillati</taxon>
        <taxon>Bacillota</taxon>
        <taxon>Bacilli</taxon>
        <taxon>Lactobacillales</taxon>
        <taxon>Lactobacillaceae</taxon>
        <taxon>Lactobacillus</taxon>
    </lineage>
</organism>
<dbReference type="EMBL" id="CP000412">
    <property type="protein sequence ID" value="ABJ57707.1"/>
    <property type="molecule type" value="Genomic_DNA"/>
</dbReference>
<dbReference type="RefSeq" id="WP_011677865.1">
    <property type="nucleotide sequence ID" value="NC_008529.1"/>
</dbReference>
<dbReference type="SMR" id="Q04CW5"/>
<dbReference type="KEGG" id="lbu:LBUL_0011"/>
<dbReference type="HOGENOM" id="CLU_078938_3_2_9"/>
<dbReference type="BioCyc" id="LDEL321956:LBUL_RS00055-MONOMER"/>
<dbReference type="GO" id="GO:1990904">
    <property type="term" value="C:ribonucleoprotein complex"/>
    <property type="evidence" value="ECO:0007669"/>
    <property type="project" value="UniProtKB-KW"/>
</dbReference>
<dbReference type="GO" id="GO:0005840">
    <property type="term" value="C:ribosome"/>
    <property type="evidence" value="ECO:0007669"/>
    <property type="project" value="UniProtKB-KW"/>
</dbReference>
<dbReference type="GO" id="GO:0019843">
    <property type="term" value="F:rRNA binding"/>
    <property type="evidence" value="ECO:0007669"/>
    <property type="project" value="UniProtKB-UniRule"/>
</dbReference>
<dbReference type="GO" id="GO:0003735">
    <property type="term" value="F:structural constituent of ribosome"/>
    <property type="evidence" value="ECO:0007669"/>
    <property type="project" value="InterPro"/>
</dbReference>
<dbReference type="GO" id="GO:0006412">
    <property type="term" value="P:translation"/>
    <property type="evidence" value="ECO:0007669"/>
    <property type="project" value="UniProtKB-UniRule"/>
</dbReference>
<dbReference type="Gene3D" id="3.10.430.100">
    <property type="entry name" value="Ribosomal protein L9, C-terminal domain"/>
    <property type="match status" value="1"/>
</dbReference>
<dbReference type="Gene3D" id="3.40.5.10">
    <property type="entry name" value="Ribosomal protein L9, N-terminal domain"/>
    <property type="match status" value="1"/>
</dbReference>
<dbReference type="HAMAP" id="MF_00503">
    <property type="entry name" value="Ribosomal_bL9"/>
    <property type="match status" value="1"/>
</dbReference>
<dbReference type="InterPro" id="IPR000244">
    <property type="entry name" value="Ribosomal_bL9"/>
</dbReference>
<dbReference type="InterPro" id="IPR009027">
    <property type="entry name" value="Ribosomal_bL9/RNase_H1_N"/>
</dbReference>
<dbReference type="InterPro" id="IPR020594">
    <property type="entry name" value="Ribosomal_bL9_bac/chp"/>
</dbReference>
<dbReference type="InterPro" id="IPR020069">
    <property type="entry name" value="Ribosomal_bL9_C"/>
</dbReference>
<dbReference type="InterPro" id="IPR036791">
    <property type="entry name" value="Ribosomal_bL9_C_sf"/>
</dbReference>
<dbReference type="InterPro" id="IPR020070">
    <property type="entry name" value="Ribosomal_bL9_N"/>
</dbReference>
<dbReference type="InterPro" id="IPR036935">
    <property type="entry name" value="Ribosomal_bL9_N_sf"/>
</dbReference>
<dbReference type="NCBIfam" id="TIGR00158">
    <property type="entry name" value="L9"/>
    <property type="match status" value="1"/>
</dbReference>
<dbReference type="PANTHER" id="PTHR21368">
    <property type="entry name" value="50S RIBOSOMAL PROTEIN L9"/>
    <property type="match status" value="1"/>
</dbReference>
<dbReference type="Pfam" id="PF03948">
    <property type="entry name" value="Ribosomal_L9_C"/>
    <property type="match status" value="1"/>
</dbReference>
<dbReference type="Pfam" id="PF01281">
    <property type="entry name" value="Ribosomal_L9_N"/>
    <property type="match status" value="1"/>
</dbReference>
<dbReference type="SUPFAM" id="SSF55658">
    <property type="entry name" value="L9 N-domain-like"/>
    <property type="match status" value="1"/>
</dbReference>
<dbReference type="SUPFAM" id="SSF55653">
    <property type="entry name" value="Ribosomal protein L9 C-domain"/>
    <property type="match status" value="1"/>
</dbReference>
<dbReference type="PROSITE" id="PS00651">
    <property type="entry name" value="RIBOSOMAL_L9"/>
    <property type="match status" value="1"/>
</dbReference>
<keyword id="KW-0687">Ribonucleoprotein</keyword>
<keyword id="KW-0689">Ribosomal protein</keyword>
<keyword id="KW-0694">RNA-binding</keyword>
<keyword id="KW-0699">rRNA-binding</keyword>
<feature type="chain" id="PRO_1000014797" description="Large ribosomal subunit protein bL9">
    <location>
        <begin position="1"/>
        <end position="151"/>
    </location>
</feature>
<comment type="function">
    <text evidence="1">Binds to the 23S rRNA.</text>
</comment>
<comment type="similarity">
    <text evidence="1">Belongs to the bacterial ribosomal protein bL9 family.</text>
</comment>
<gene>
    <name evidence="1" type="primary">rplI</name>
    <name type="ordered locus">LBUL_0011</name>
</gene>
<proteinExistence type="inferred from homology"/>